<keyword id="KW-0131">Cell cycle</keyword>
<keyword id="KW-0338">Growth arrest</keyword>
<keyword id="KW-0539">Nucleus</keyword>
<keyword id="KW-1185">Reference proteome</keyword>
<keyword id="KW-0678">Repressor</keyword>
<keyword id="KW-0804">Transcription</keyword>
<keyword id="KW-0805">Transcription regulation</keyword>
<protein>
    <recommendedName>
        <fullName evidence="3">Nuclear protein 2</fullName>
    </recommendedName>
    <alternativeName>
        <fullName evidence="1">Nuclear transcriptional regulator 1-like protein</fullName>
    </alternativeName>
    <alternativeName>
        <fullName evidence="1">Nuclear transcriptional regulator protein 2</fullName>
    </alternativeName>
</protein>
<comment type="function">
    <text evidence="1">Acts as a transcriptional repressor by inhibiting gene expression at the NUPR1 promoter in a p53/TP53-dependent manner in cancer cells. Involved in the G1 cell cycle arrest, and in a decrease in cell viability and cell proliferation. Plays a role as a negative regulator of the protumoral factor NUPR1.</text>
</comment>
<comment type="subcellular location">
    <subcellularLocation>
        <location evidence="1">Nucleus</location>
    </subcellularLocation>
</comment>
<comment type="similarity">
    <text evidence="3">Belongs to the NUPR family.</text>
</comment>
<reference key="1">
    <citation type="submission" date="2005-10" db="EMBL/GenBank/DDBJ databases">
        <authorList>
            <consortium name="NIH - Mammalian Gene Collection (MGC) project"/>
        </authorList>
    </citation>
    <scope>NUCLEOTIDE SEQUENCE [LARGE SCALE MRNA]</scope>
    <source>
        <strain>Crossbred X Angus</strain>
        <tissue>Liver</tissue>
    </source>
</reference>
<sequence length="98" mass="11522">MEPAAPTVQPRAQPPPPDVWPPVGSEEEFYDCPDYYYLRDFPACGAGRINGRTRRERELRTNWLVPGGHERKIAQKLLNSQRKRRQRQLQPRPRTRLT</sequence>
<evidence type="ECO:0000250" key="1">
    <source>
        <dbReference type="UniProtKB" id="A6NF83"/>
    </source>
</evidence>
<evidence type="ECO:0000256" key="2">
    <source>
        <dbReference type="SAM" id="MobiDB-lite"/>
    </source>
</evidence>
<evidence type="ECO:0000305" key="3"/>
<dbReference type="EMBL" id="BC108184">
    <property type="protein sequence ID" value="AAI08185.1"/>
    <property type="molecule type" value="mRNA"/>
</dbReference>
<dbReference type="RefSeq" id="NP_001035664.1">
    <property type="nucleotide sequence ID" value="NM_001040574.1"/>
</dbReference>
<dbReference type="SMR" id="Q32PB4"/>
<dbReference type="FunCoup" id="Q32PB4">
    <property type="interactions" value="266"/>
</dbReference>
<dbReference type="STRING" id="9913.ENSBTAP00000042240"/>
<dbReference type="PaxDb" id="9913-ENSBTAP00000042240"/>
<dbReference type="GeneID" id="614047"/>
<dbReference type="KEGG" id="bta:614047"/>
<dbReference type="CTD" id="389493"/>
<dbReference type="eggNOG" id="KOG4319">
    <property type="taxonomic scope" value="Eukaryota"/>
</dbReference>
<dbReference type="InParanoid" id="Q32PB4"/>
<dbReference type="OrthoDB" id="10030453at2759"/>
<dbReference type="Proteomes" id="UP000009136">
    <property type="component" value="Unplaced"/>
</dbReference>
<dbReference type="GO" id="GO:0005634">
    <property type="term" value="C:nucleus"/>
    <property type="evidence" value="ECO:0000250"/>
    <property type="project" value="UniProtKB"/>
</dbReference>
<dbReference type="GO" id="GO:0009267">
    <property type="term" value="P:cellular response to starvation"/>
    <property type="evidence" value="ECO:0000250"/>
    <property type="project" value="UniProtKB"/>
</dbReference>
<dbReference type="GO" id="GO:0006974">
    <property type="term" value="P:DNA damage response"/>
    <property type="evidence" value="ECO:0000250"/>
    <property type="project" value="UniProtKB"/>
</dbReference>
<dbReference type="GO" id="GO:0045786">
    <property type="term" value="P:negative regulation of cell cycle"/>
    <property type="evidence" value="ECO:0000318"/>
    <property type="project" value="GO_Central"/>
</dbReference>
<dbReference type="GO" id="GO:0008285">
    <property type="term" value="P:negative regulation of cell population proliferation"/>
    <property type="evidence" value="ECO:0000250"/>
    <property type="project" value="UniProtKB"/>
</dbReference>
<dbReference type="GO" id="GO:0000122">
    <property type="term" value="P:negative regulation of transcription by RNA polymerase II"/>
    <property type="evidence" value="ECO:0000250"/>
    <property type="project" value="UniProtKB"/>
</dbReference>
<dbReference type="GO" id="GO:0051726">
    <property type="term" value="P:regulation of cell cycle"/>
    <property type="evidence" value="ECO:0000250"/>
    <property type="project" value="UniProtKB"/>
</dbReference>
<dbReference type="GO" id="GO:0006357">
    <property type="term" value="P:regulation of transcription by RNA polymerase II"/>
    <property type="evidence" value="ECO:0000318"/>
    <property type="project" value="GO_Central"/>
</dbReference>
<dbReference type="InterPro" id="IPR018792">
    <property type="entry name" value="NUPR1-like"/>
</dbReference>
<dbReference type="PANTHER" id="PTHR17149">
    <property type="entry name" value="NUCLEAR PROTEIN 1 AND 2"/>
    <property type="match status" value="1"/>
</dbReference>
<dbReference type="PANTHER" id="PTHR17149:SF3">
    <property type="entry name" value="NUCLEAR PROTEIN 2"/>
    <property type="match status" value="1"/>
</dbReference>
<dbReference type="Pfam" id="PF10195">
    <property type="entry name" value="Phospho_p8"/>
    <property type="match status" value="1"/>
</dbReference>
<organism>
    <name type="scientific">Bos taurus</name>
    <name type="common">Bovine</name>
    <dbReference type="NCBI Taxonomy" id="9913"/>
    <lineage>
        <taxon>Eukaryota</taxon>
        <taxon>Metazoa</taxon>
        <taxon>Chordata</taxon>
        <taxon>Craniata</taxon>
        <taxon>Vertebrata</taxon>
        <taxon>Euteleostomi</taxon>
        <taxon>Mammalia</taxon>
        <taxon>Eutheria</taxon>
        <taxon>Laurasiatheria</taxon>
        <taxon>Artiodactyla</taxon>
        <taxon>Ruminantia</taxon>
        <taxon>Pecora</taxon>
        <taxon>Bovidae</taxon>
        <taxon>Bovinae</taxon>
        <taxon>Bos</taxon>
    </lineage>
</organism>
<proteinExistence type="inferred from homology"/>
<feature type="chain" id="PRO_0000346767" description="Nuclear protein 2">
    <location>
        <begin position="1"/>
        <end position="98"/>
    </location>
</feature>
<feature type="region of interest" description="Disordered" evidence="2">
    <location>
        <begin position="1"/>
        <end position="24"/>
    </location>
</feature>
<feature type="region of interest" description="Disordered" evidence="2">
    <location>
        <begin position="78"/>
        <end position="98"/>
    </location>
</feature>
<feature type="compositionally biased region" description="Low complexity" evidence="2">
    <location>
        <begin position="1"/>
        <end position="11"/>
    </location>
</feature>
<feature type="compositionally biased region" description="Basic residues" evidence="2">
    <location>
        <begin position="81"/>
        <end position="98"/>
    </location>
</feature>
<gene>
    <name evidence="1" type="primary">NUPR2</name>
    <name evidence="1" type="synonym">NUPR1L</name>
</gene>
<accession>Q32PB4</accession>
<name>NUPR2_BOVIN</name>